<reference key="1">
    <citation type="journal article" date="1999" name="Cell">
        <title>A striking organization of a large family of human neural cadherin-like cell adhesion genes.</title>
        <authorList>
            <person name="Wu Q."/>
            <person name="Maniatis T."/>
        </authorList>
    </citation>
    <scope>NUCLEOTIDE SEQUENCE [MRNA]</scope>
</reference>
<reference key="2">
    <citation type="journal article" date="2001" name="FEBS Lett.">
        <title>The human and murine protocadherin-beta one-exon gene families show high evolutionary conservation, despite the difference in gene number.</title>
        <authorList>
            <person name="Vanhalst K."/>
            <person name="Kools P."/>
            <person name="Vanden Eynde E."/>
            <person name="van Roy F."/>
        </authorList>
    </citation>
    <scope>NUCLEOTIDE SEQUENCE [MRNA]</scope>
</reference>
<reference key="3">
    <citation type="journal article" date="2003" name="Genome Res.">
        <title>The secreted protein discovery initiative (SPDI), a large-scale effort to identify novel human secreted and transmembrane proteins: a bioinformatics assessment.</title>
        <authorList>
            <person name="Clark H.F."/>
            <person name="Gurney A.L."/>
            <person name="Abaya E."/>
            <person name="Baker K."/>
            <person name="Baldwin D.T."/>
            <person name="Brush J."/>
            <person name="Chen J."/>
            <person name="Chow B."/>
            <person name="Chui C."/>
            <person name="Crowley C."/>
            <person name="Currell B."/>
            <person name="Deuel B."/>
            <person name="Dowd P."/>
            <person name="Eaton D."/>
            <person name="Foster J.S."/>
            <person name="Grimaldi C."/>
            <person name="Gu Q."/>
            <person name="Hass P.E."/>
            <person name="Heldens S."/>
            <person name="Huang A."/>
            <person name="Kim H.S."/>
            <person name="Klimowski L."/>
            <person name="Jin Y."/>
            <person name="Johnson S."/>
            <person name="Lee J."/>
            <person name="Lewis L."/>
            <person name="Liao D."/>
            <person name="Mark M.R."/>
            <person name="Robbie E."/>
            <person name="Sanchez C."/>
            <person name="Schoenfeld J."/>
            <person name="Seshagiri S."/>
            <person name="Simmons L."/>
            <person name="Singh J."/>
            <person name="Smith V."/>
            <person name="Stinson J."/>
            <person name="Vagts A."/>
            <person name="Vandlen R.L."/>
            <person name="Watanabe C."/>
            <person name="Wieand D."/>
            <person name="Woods K."/>
            <person name="Xie M.-H."/>
            <person name="Yansura D.G."/>
            <person name="Yi S."/>
            <person name="Yu G."/>
            <person name="Yuan J."/>
            <person name="Zhang M."/>
            <person name="Zhang Z."/>
            <person name="Goddard A.D."/>
            <person name="Wood W.I."/>
            <person name="Godowski P.J."/>
            <person name="Gray A.M."/>
        </authorList>
    </citation>
    <scope>NUCLEOTIDE SEQUENCE [LARGE SCALE MRNA]</scope>
</reference>
<reference key="4">
    <citation type="journal article" date="2004" name="Genome Res.">
        <title>The status, quality, and expansion of the NIH full-length cDNA project: the Mammalian Gene Collection (MGC).</title>
        <authorList>
            <consortium name="The MGC Project Team"/>
        </authorList>
    </citation>
    <scope>NUCLEOTIDE SEQUENCE [LARGE SCALE MRNA]</scope>
    <source>
        <tissue>Brain</tissue>
    </source>
</reference>
<reference key="5">
    <citation type="journal article" date="2004" name="Protein Sci.">
        <title>Signal peptide prediction based on analysis of experimentally verified cleavage sites.</title>
        <authorList>
            <person name="Zhang Z."/>
            <person name="Henzel W.J."/>
        </authorList>
    </citation>
    <scope>PROTEIN SEQUENCE OF 27-41</scope>
</reference>
<organism>
    <name type="scientific">Homo sapiens</name>
    <name type="common">Human</name>
    <dbReference type="NCBI Taxonomy" id="9606"/>
    <lineage>
        <taxon>Eukaryota</taxon>
        <taxon>Metazoa</taxon>
        <taxon>Chordata</taxon>
        <taxon>Craniata</taxon>
        <taxon>Vertebrata</taxon>
        <taxon>Euteleostomi</taxon>
        <taxon>Mammalia</taxon>
        <taxon>Eutheria</taxon>
        <taxon>Euarchontoglires</taxon>
        <taxon>Primates</taxon>
        <taxon>Haplorrhini</taxon>
        <taxon>Catarrhini</taxon>
        <taxon>Hominidae</taxon>
        <taxon>Homo</taxon>
    </lineage>
</organism>
<protein>
    <recommendedName>
        <fullName>Protocadherin beta-10</fullName>
        <shortName>PCDH-beta-10</shortName>
    </recommendedName>
</protein>
<comment type="function">
    <text>Potential calcium-dependent cell-adhesion protein. May be involved in the establishment and maintenance of specific neuronal connections in the brain.</text>
</comment>
<comment type="subcellular location">
    <subcellularLocation>
        <location evidence="1">Cell membrane</location>
        <topology evidence="1">Single-pass type I membrane protein</topology>
    </subcellularLocation>
</comment>
<feature type="signal peptide" evidence="4">
    <location>
        <begin position="1"/>
        <end position="26"/>
    </location>
</feature>
<feature type="chain" id="PRO_0000003932" description="Protocadherin beta-10">
    <location>
        <begin position="27"/>
        <end position="800"/>
    </location>
</feature>
<feature type="topological domain" description="Extracellular" evidence="2">
    <location>
        <begin position="27"/>
        <end position="692"/>
    </location>
</feature>
<feature type="transmembrane region" description="Helical" evidence="2">
    <location>
        <begin position="693"/>
        <end position="713"/>
    </location>
</feature>
<feature type="topological domain" description="Cytoplasmic" evidence="2">
    <location>
        <begin position="714"/>
        <end position="800"/>
    </location>
</feature>
<feature type="domain" description="Cadherin 1" evidence="3">
    <location>
        <begin position="35"/>
        <end position="133"/>
    </location>
</feature>
<feature type="domain" description="Cadherin 2" evidence="3">
    <location>
        <begin position="138"/>
        <end position="242"/>
    </location>
</feature>
<feature type="domain" description="Cadherin 3" evidence="3">
    <location>
        <begin position="247"/>
        <end position="347"/>
    </location>
</feature>
<feature type="domain" description="Cadherin 4" evidence="3">
    <location>
        <begin position="352"/>
        <end position="451"/>
    </location>
</feature>
<feature type="domain" description="Cadherin 5" evidence="3">
    <location>
        <begin position="456"/>
        <end position="561"/>
    </location>
</feature>
<feature type="domain" description="Cadherin 6" evidence="3">
    <location>
        <begin position="568"/>
        <end position="671"/>
    </location>
</feature>
<feature type="glycosylation site" description="N-linked (GlcNAc...) asparagine" evidence="2">
    <location>
        <position position="169"/>
    </location>
</feature>
<feature type="glycosylation site" description="N-linked (GlcNAc...) asparagine" evidence="2">
    <location>
        <position position="181"/>
    </location>
</feature>
<feature type="glycosylation site" description="N-linked (GlcNAc...) asparagine" evidence="2">
    <location>
        <position position="418"/>
    </location>
</feature>
<feature type="glycosylation site" description="N-linked (GlcNAc...) asparagine" evidence="2">
    <location>
        <position position="436"/>
    </location>
</feature>
<feature type="glycosylation site" description="N-linked (GlcNAc...) asparagine" evidence="2">
    <location>
        <position position="567"/>
    </location>
</feature>
<feature type="sequence conflict" description="In Ref. 2; AAK51616." evidence="5" ref="2">
    <original>R</original>
    <variation>S</variation>
    <location>
        <position position="543"/>
    </location>
</feature>
<feature type="sequence conflict" description="In Ref. 2; AAK51616." evidence="5" ref="2">
    <original>L</original>
    <variation>V</variation>
    <location>
        <position position="660"/>
    </location>
</feature>
<proteinExistence type="evidence at protein level"/>
<keyword id="KW-0106">Calcium</keyword>
<keyword id="KW-0130">Cell adhesion</keyword>
<keyword id="KW-1003">Cell membrane</keyword>
<keyword id="KW-0903">Direct protein sequencing</keyword>
<keyword id="KW-0325">Glycoprotein</keyword>
<keyword id="KW-0472">Membrane</keyword>
<keyword id="KW-1267">Proteomics identification</keyword>
<keyword id="KW-1185">Reference proteome</keyword>
<keyword id="KW-0677">Repeat</keyword>
<keyword id="KW-0732">Signal</keyword>
<keyword id="KW-0812">Transmembrane</keyword>
<keyword id="KW-1133">Transmembrane helix</keyword>
<gene>
    <name type="primary">PCDHB10</name>
    <name type="ORF">UNQ1906/PRO4352</name>
</gene>
<dbReference type="EMBL" id="AF152489">
    <property type="protein sequence ID" value="AAD43750.1"/>
    <property type="molecule type" value="mRNA"/>
</dbReference>
<dbReference type="EMBL" id="AF217748">
    <property type="protein sequence ID" value="AAK51616.1"/>
    <property type="molecule type" value="mRNA"/>
</dbReference>
<dbReference type="EMBL" id="AY358720">
    <property type="protein sequence ID" value="AAQ89082.1"/>
    <property type="molecule type" value="mRNA"/>
</dbReference>
<dbReference type="EMBL" id="BC031837">
    <property type="protein sequence ID" value="AAH31837.1"/>
    <property type="molecule type" value="mRNA"/>
</dbReference>
<dbReference type="CCDS" id="CCDS4252.1"/>
<dbReference type="RefSeq" id="NP_061753.1">
    <property type="nucleotide sequence ID" value="NM_018930.4"/>
</dbReference>
<dbReference type="SMR" id="Q9UN67"/>
<dbReference type="BioGRID" id="121066">
    <property type="interactions" value="7"/>
</dbReference>
<dbReference type="FunCoup" id="Q9UN67">
    <property type="interactions" value="62"/>
</dbReference>
<dbReference type="IntAct" id="Q9UN67">
    <property type="interactions" value="10"/>
</dbReference>
<dbReference type="STRING" id="9606.ENSP00000239446"/>
<dbReference type="GlyConnect" id="1676">
    <property type="glycosylation" value="1 N-Linked glycan (1 site)"/>
</dbReference>
<dbReference type="GlyCosmos" id="Q9UN67">
    <property type="glycosylation" value="5 sites, 1 glycan"/>
</dbReference>
<dbReference type="GlyGen" id="Q9UN67">
    <property type="glycosylation" value="5 sites, 1 N-linked glycan (1 site)"/>
</dbReference>
<dbReference type="iPTMnet" id="Q9UN67"/>
<dbReference type="PhosphoSitePlus" id="Q9UN67"/>
<dbReference type="BioMuta" id="PCDHB10"/>
<dbReference type="DMDM" id="13431371"/>
<dbReference type="jPOST" id="Q9UN67"/>
<dbReference type="MassIVE" id="Q9UN67"/>
<dbReference type="PaxDb" id="9606-ENSP00000239446"/>
<dbReference type="PeptideAtlas" id="Q9UN67"/>
<dbReference type="Antibodypedia" id="2995">
    <property type="antibodies" value="103 antibodies from 21 providers"/>
</dbReference>
<dbReference type="DNASU" id="56126"/>
<dbReference type="Ensembl" id="ENST00000239446.6">
    <property type="protein sequence ID" value="ENSP00000239446.4"/>
    <property type="gene ID" value="ENSG00000120324.9"/>
</dbReference>
<dbReference type="Ensembl" id="ENST00000708377.1">
    <property type="protein sequence ID" value="ENSP00000517197.1"/>
    <property type="gene ID" value="ENSG00000291689.1"/>
</dbReference>
<dbReference type="GeneID" id="56126"/>
<dbReference type="KEGG" id="hsa:56126"/>
<dbReference type="MANE-Select" id="ENST00000239446.6">
    <property type="protein sequence ID" value="ENSP00000239446.4"/>
    <property type="RefSeq nucleotide sequence ID" value="NM_018930.4"/>
    <property type="RefSeq protein sequence ID" value="NP_061753.1"/>
</dbReference>
<dbReference type="UCSC" id="uc003lix.4">
    <property type="organism name" value="human"/>
</dbReference>
<dbReference type="AGR" id="HGNC:8681"/>
<dbReference type="CTD" id="56126"/>
<dbReference type="DisGeNET" id="56126"/>
<dbReference type="GeneCards" id="PCDHB10"/>
<dbReference type="HGNC" id="HGNC:8681">
    <property type="gene designation" value="PCDHB10"/>
</dbReference>
<dbReference type="HPA" id="ENSG00000120324">
    <property type="expression patterns" value="Low tissue specificity"/>
</dbReference>
<dbReference type="MIM" id="604967">
    <property type="type" value="gene"/>
</dbReference>
<dbReference type="MIM" id="606336">
    <property type="type" value="gene"/>
</dbReference>
<dbReference type="neXtProt" id="NX_Q9UN67"/>
<dbReference type="OpenTargets" id="ENSG00000120324"/>
<dbReference type="PharmGKB" id="PA33026"/>
<dbReference type="VEuPathDB" id="HostDB:ENSG00000120324"/>
<dbReference type="eggNOG" id="KOG3594">
    <property type="taxonomic scope" value="Eukaryota"/>
</dbReference>
<dbReference type="GeneTree" id="ENSGT00940000163508"/>
<dbReference type="HOGENOM" id="CLU_006480_3_0_1"/>
<dbReference type="InParanoid" id="Q9UN67"/>
<dbReference type="OMA" id="LCISIYY"/>
<dbReference type="OrthoDB" id="6252479at2759"/>
<dbReference type="PAN-GO" id="Q9UN67">
    <property type="GO annotations" value="2 GO annotations based on evolutionary models"/>
</dbReference>
<dbReference type="PhylomeDB" id="Q9UN67"/>
<dbReference type="TreeFam" id="TF332299"/>
<dbReference type="PathwayCommons" id="Q9UN67"/>
<dbReference type="SignaLink" id="Q9UN67"/>
<dbReference type="BioGRID-ORCS" id="56126">
    <property type="hits" value="11 hits in 1104 CRISPR screens"/>
</dbReference>
<dbReference type="GeneWiki" id="PCDHB10"/>
<dbReference type="GenomeRNAi" id="56126"/>
<dbReference type="Pharos" id="Q9UN67">
    <property type="development level" value="Tdark"/>
</dbReference>
<dbReference type="PRO" id="PR:Q9UN67"/>
<dbReference type="Proteomes" id="UP000005640">
    <property type="component" value="Chromosome 5"/>
</dbReference>
<dbReference type="RNAct" id="Q9UN67">
    <property type="molecule type" value="protein"/>
</dbReference>
<dbReference type="Bgee" id="ENSG00000120324">
    <property type="expression patterns" value="Expressed in cortical plate and 131 other cell types or tissues"/>
</dbReference>
<dbReference type="GO" id="GO:0016020">
    <property type="term" value="C:membrane"/>
    <property type="evidence" value="ECO:0000303"/>
    <property type="project" value="UniProtKB"/>
</dbReference>
<dbReference type="GO" id="GO:0005886">
    <property type="term" value="C:plasma membrane"/>
    <property type="evidence" value="ECO:0000318"/>
    <property type="project" value="GO_Central"/>
</dbReference>
<dbReference type="GO" id="GO:0045202">
    <property type="term" value="C:synapse"/>
    <property type="evidence" value="ECO:0007669"/>
    <property type="project" value="GOC"/>
</dbReference>
<dbReference type="GO" id="GO:0005509">
    <property type="term" value="F:calcium ion binding"/>
    <property type="evidence" value="ECO:0007669"/>
    <property type="project" value="InterPro"/>
</dbReference>
<dbReference type="GO" id="GO:0016339">
    <property type="term" value="P:calcium-dependent cell-cell adhesion via plasma membrane cell adhesion molecules"/>
    <property type="evidence" value="ECO:0000303"/>
    <property type="project" value="UniProtKB"/>
</dbReference>
<dbReference type="GO" id="GO:0007155">
    <property type="term" value="P:cell adhesion"/>
    <property type="evidence" value="ECO:0000318"/>
    <property type="project" value="GO_Central"/>
</dbReference>
<dbReference type="GO" id="GO:0007268">
    <property type="term" value="P:chemical synaptic transmission"/>
    <property type="evidence" value="ECO:0000304"/>
    <property type="project" value="UniProtKB"/>
</dbReference>
<dbReference type="GO" id="GO:0007156">
    <property type="term" value="P:homophilic cell adhesion via plasma membrane adhesion molecules"/>
    <property type="evidence" value="ECO:0007669"/>
    <property type="project" value="InterPro"/>
</dbReference>
<dbReference type="GO" id="GO:0007416">
    <property type="term" value="P:synapse assembly"/>
    <property type="evidence" value="ECO:0000304"/>
    <property type="project" value="UniProtKB"/>
</dbReference>
<dbReference type="CDD" id="cd11304">
    <property type="entry name" value="Cadherin_repeat"/>
    <property type="match status" value="5"/>
</dbReference>
<dbReference type="FunFam" id="2.60.40.60:FF:000001">
    <property type="entry name" value="Protocadherin alpha 2"/>
    <property type="match status" value="1"/>
</dbReference>
<dbReference type="FunFam" id="2.60.40.60:FF:000002">
    <property type="entry name" value="Protocadherin alpha 2"/>
    <property type="match status" value="1"/>
</dbReference>
<dbReference type="FunFam" id="2.60.40.60:FF:000006">
    <property type="entry name" value="Protocadherin alpha 2"/>
    <property type="match status" value="1"/>
</dbReference>
<dbReference type="FunFam" id="2.60.40.60:FF:000046">
    <property type="entry name" value="Protocadherin beta 5"/>
    <property type="match status" value="1"/>
</dbReference>
<dbReference type="FunFam" id="2.60.40.60:FF:000309">
    <property type="entry name" value="Protocadherin beta-8"/>
    <property type="match status" value="1"/>
</dbReference>
<dbReference type="FunFam" id="2.60.40.60:FF:000018">
    <property type="entry name" value="Protocadherin gamma c3"/>
    <property type="match status" value="1"/>
</dbReference>
<dbReference type="Gene3D" id="2.60.40.60">
    <property type="entry name" value="Cadherins"/>
    <property type="match status" value="6"/>
</dbReference>
<dbReference type="InterPro" id="IPR002126">
    <property type="entry name" value="Cadherin-like_dom"/>
</dbReference>
<dbReference type="InterPro" id="IPR015919">
    <property type="entry name" value="Cadherin-like_sf"/>
</dbReference>
<dbReference type="InterPro" id="IPR032455">
    <property type="entry name" value="Cadherin_C"/>
</dbReference>
<dbReference type="InterPro" id="IPR020894">
    <property type="entry name" value="Cadherin_CS"/>
</dbReference>
<dbReference type="InterPro" id="IPR013164">
    <property type="entry name" value="Cadherin_N"/>
</dbReference>
<dbReference type="InterPro" id="IPR050174">
    <property type="entry name" value="Protocadherin/Cadherin-CA"/>
</dbReference>
<dbReference type="PANTHER" id="PTHR24028">
    <property type="entry name" value="CADHERIN-87A"/>
    <property type="match status" value="1"/>
</dbReference>
<dbReference type="PANTHER" id="PTHR24028:SF54">
    <property type="entry name" value="PROTOCADHERIN BETA-10"/>
    <property type="match status" value="1"/>
</dbReference>
<dbReference type="Pfam" id="PF00028">
    <property type="entry name" value="Cadherin"/>
    <property type="match status" value="5"/>
</dbReference>
<dbReference type="Pfam" id="PF08266">
    <property type="entry name" value="Cadherin_2"/>
    <property type="match status" value="1"/>
</dbReference>
<dbReference type="Pfam" id="PF16492">
    <property type="entry name" value="Cadherin_C_2"/>
    <property type="match status" value="1"/>
</dbReference>
<dbReference type="PRINTS" id="PR00205">
    <property type="entry name" value="CADHERIN"/>
</dbReference>
<dbReference type="SMART" id="SM00112">
    <property type="entry name" value="CA"/>
    <property type="match status" value="5"/>
</dbReference>
<dbReference type="SUPFAM" id="SSF49313">
    <property type="entry name" value="Cadherin-like"/>
    <property type="match status" value="6"/>
</dbReference>
<dbReference type="PROSITE" id="PS00232">
    <property type="entry name" value="CADHERIN_1"/>
    <property type="match status" value="5"/>
</dbReference>
<dbReference type="PROSITE" id="PS50268">
    <property type="entry name" value="CADHERIN_2"/>
    <property type="match status" value="6"/>
</dbReference>
<sequence>MAVRELCFPRQRQVLFLFLFWGVSLAGSGFGRYSVTEETEKGSFVVNLAKDLGLAEGELAARGTRVVSDDNKQYLLLDSHTGNLLTNEKLDREKLCGPKEPCMLYFQILMDDPFQIYRAELRVRDINDHAPVFQDKETVLKISENTAEGTAFRLERAQDPDGGLNGIQNYTISPNSFFHINISGGDEGMIYPELVLDKALDREEQGELSLTLTALDGGSPSRSGTSTVRIVVLDVNDNAPQFAQALYETQAPENSPIGFLIVKVWAEDVDSGVNAEVSYSFFDASENIRTTFQINPFSGEIFLRELLDYELVNSYKINIQAMDGGGLSARCRVLVEVLDTNDNPPELIVSSFSNSVAENSPETPLAVFKINDRDSGENGKMVCYIQENLPFLLKPSVENFYILITEGALDREIRAEYNITITVTDLGTPRLKTEHNITVLVSDVNDNAPAFTQTSYTLFVRENNSPALHIGSVSATDRDSGTNAQVTYSLLPPQDPHLPLASLVSINADNGHLFALRSLDYEALQAFEFRVGATDRGSPALSREALVRVLVLDANDNSPFVLYPLQNGSAPCTELVPRAAEPGYLVTKVVAVDGDSGQNAWLSYQLLKATEPGLFGVWAHNGEVRTARLLSERDAAKHRLVVLVKDNGEPPRSATATLHLLLVDGFSQPYLPLPEAAPAQAQAEADLLTVYLVVALASVSSLFLLSVLLFVAVRLCRRSRAASVGRCSVPEGPFPGHLVDVRGAETLSQSYQYEVCLTGGPGTSEFKFLKPVISDIQAQGPGRKGEENSTFRNSFGFNIQ</sequence>
<evidence type="ECO:0000250" key="1"/>
<evidence type="ECO:0000255" key="2"/>
<evidence type="ECO:0000255" key="3">
    <source>
        <dbReference type="PROSITE-ProRule" id="PRU00043"/>
    </source>
</evidence>
<evidence type="ECO:0000269" key="4">
    <source>
    </source>
</evidence>
<evidence type="ECO:0000305" key="5"/>
<accession>Q9UN67</accession>
<accession>Q96T99</accession>
<name>PCDBA_HUMAN</name>